<sequence>MENKLIELIETYNDFPRKGIEFKDVLGIIQEPKIFKELILKMSSSQIIRNAEAIISIDARGFIFGSAISLEASKPMIVARKPGKLPGELSKKKYSLEYGENSLSIQKKCLQKYNSYAIVDDLLATGGTVSCVSKLLESNGKEVLGLLVVVELMKLKGRFKLKFPVESSITF</sequence>
<proteinExistence type="inferred from homology"/>
<evidence type="ECO:0000255" key="1">
    <source>
        <dbReference type="HAMAP-Rule" id="MF_00004"/>
    </source>
</evidence>
<name>APT_PROM5</name>
<organism>
    <name type="scientific">Prochlorococcus marinus (strain MIT 9515)</name>
    <dbReference type="NCBI Taxonomy" id="167542"/>
    <lineage>
        <taxon>Bacteria</taxon>
        <taxon>Bacillati</taxon>
        <taxon>Cyanobacteriota</taxon>
        <taxon>Cyanophyceae</taxon>
        <taxon>Synechococcales</taxon>
        <taxon>Prochlorococcaceae</taxon>
        <taxon>Prochlorococcus</taxon>
    </lineage>
</organism>
<keyword id="KW-0963">Cytoplasm</keyword>
<keyword id="KW-0328">Glycosyltransferase</keyword>
<keyword id="KW-0660">Purine salvage</keyword>
<keyword id="KW-0808">Transferase</keyword>
<feature type="chain" id="PRO_0000329367" description="Adenine phosphoribosyltransferase">
    <location>
        <begin position="1"/>
        <end position="171"/>
    </location>
</feature>
<gene>
    <name evidence="1" type="primary">apt</name>
    <name type="ordered locus">P9515_12151</name>
</gene>
<protein>
    <recommendedName>
        <fullName evidence="1">Adenine phosphoribosyltransferase</fullName>
        <shortName evidence="1">APRT</shortName>
        <ecNumber evidence="1">2.4.2.7</ecNumber>
    </recommendedName>
</protein>
<dbReference type="EC" id="2.4.2.7" evidence="1"/>
<dbReference type="EMBL" id="CP000552">
    <property type="protein sequence ID" value="ABM72422.1"/>
    <property type="molecule type" value="Genomic_DNA"/>
</dbReference>
<dbReference type="RefSeq" id="WP_011820521.1">
    <property type="nucleotide sequence ID" value="NC_008817.1"/>
</dbReference>
<dbReference type="SMR" id="A2BXB1"/>
<dbReference type="STRING" id="167542.P9515_12151"/>
<dbReference type="GeneID" id="60201163"/>
<dbReference type="KEGG" id="pmc:P9515_12151"/>
<dbReference type="eggNOG" id="COG0503">
    <property type="taxonomic scope" value="Bacteria"/>
</dbReference>
<dbReference type="HOGENOM" id="CLU_063339_3_3_3"/>
<dbReference type="OrthoDB" id="9803963at2"/>
<dbReference type="UniPathway" id="UPA00588">
    <property type="reaction ID" value="UER00646"/>
</dbReference>
<dbReference type="Proteomes" id="UP000001589">
    <property type="component" value="Chromosome"/>
</dbReference>
<dbReference type="GO" id="GO:0005737">
    <property type="term" value="C:cytoplasm"/>
    <property type="evidence" value="ECO:0007669"/>
    <property type="project" value="UniProtKB-SubCell"/>
</dbReference>
<dbReference type="GO" id="GO:0002055">
    <property type="term" value="F:adenine binding"/>
    <property type="evidence" value="ECO:0007669"/>
    <property type="project" value="TreeGrafter"/>
</dbReference>
<dbReference type="GO" id="GO:0003999">
    <property type="term" value="F:adenine phosphoribosyltransferase activity"/>
    <property type="evidence" value="ECO:0007669"/>
    <property type="project" value="UniProtKB-UniRule"/>
</dbReference>
<dbReference type="GO" id="GO:0016208">
    <property type="term" value="F:AMP binding"/>
    <property type="evidence" value="ECO:0007669"/>
    <property type="project" value="TreeGrafter"/>
</dbReference>
<dbReference type="GO" id="GO:0006168">
    <property type="term" value="P:adenine salvage"/>
    <property type="evidence" value="ECO:0007669"/>
    <property type="project" value="InterPro"/>
</dbReference>
<dbReference type="GO" id="GO:0044209">
    <property type="term" value="P:AMP salvage"/>
    <property type="evidence" value="ECO:0007669"/>
    <property type="project" value="UniProtKB-UniRule"/>
</dbReference>
<dbReference type="GO" id="GO:0006166">
    <property type="term" value="P:purine ribonucleoside salvage"/>
    <property type="evidence" value="ECO:0007669"/>
    <property type="project" value="UniProtKB-KW"/>
</dbReference>
<dbReference type="CDD" id="cd06223">
    <property type="entry name" value="PRTases_typeI"/>
    <property type="match status" value="1"/>
</dbReference>
<dbReference type="FunFam" id="3.40.50.2020:FF:000004">
    <property type="entry name" value="Adenine phosphoribosyltransferase"/>
    <property type="match status" value="1"/>
</dbReference>
<dbReference type="Gene3D" id="3.40.50.2020">
    <property type="match status" value="1"/>
</dbReference>
<dbReference type="HAMAP" id="MF_00004">
    <property type="entry name" value="Aden_phosphoribosyltr"/>
    <property type="match status" value="1"/>
</dbReference>
<dbReference type="InterPro" id="IPR005764">
    <property type="entry name" value="Ade_phspho_trans"/>
</dbReference>
<dbReference type="InterPro" id="IPR000836">
    <property type="entry name" value="PRibTrfase_dom"/>
</dbReference>
<dbReference type="InterPro" id="IPR029057">
    <property type="entry name" value="PRTase-like"/>
</dbReference>
<dbReference type="InterPro" id="IPR050054">
    <property type="entry name" value="UPRTase/APRTase"/>
</dbReference>
<dbReference type="NCBIfam" id="NF002636">
    <property type="entry name" value="PRK02304.1-5"/>
    <property type="match status" value="1"/>
</dbReference>
<dbReference type="PANTHER" id="PTHR32315">
    <property type="entry name" value="ADENINE PHOSPHORIBOSYLTRANSFERASE"/>
    <property type="match status" value="1"/>
</dbReference>
<dbReference type="PANTHER" id="PTHR32315:SF3">
    <property type="entry name" value="ADENINE PHOSPHORIBOSYLTRANSFERASE"/>
    <property type="match status" value="1"/>
</dbReference>
<dbReference type="Pfam" id="PF00156">
    <property type="entry name" value="Pribosyltran"/>
    <property type="match status" value="1"/>
</dbReference>
<dbReference type="SUPFAM" id="SSF53271">
    <property type="entry name" value="PRTase-like"/>
    <property type="match status" value="1"/>
</dbReference>
<accession>A2BXB1</accession>
<comment type="function">
    <text evidence="1">Catalyzes a salvage reaction resulting in the formation of AMP, that is energically less costly than de novo synthesis.</text>
</comment>
<comment type="catalytic activity">
    <reaction evidence="1">
        <text>AMP + diphosphate = 5-phospho-alpha-D-ribose 1-diphosphate + adenine</text>
        <dbReference type="Rhea" id="RHEA:16609"/>
        <dbReference type="ChEBI" id="CHEBI:16708"/>
        <dbReference type="ChEBI" id="CHEBI:33019"/>
        <dbReference type="ChEBI" id="CHEBI:58017"/>
        <dbReference type="ChEBI" id="CHEBI:456215"/>
        <dbReference type="EC" id="2.4.2.7"/>
    </reaction>
</comment>
<comment type="pathway">
    <text evidence="1">Purine metabolism; AMP biosynthesis via salvage pathway; AMP from adenine: step 1/1.</text>
</comment>
<comment type="subunit">
    <text evidence="1">Homodimer.</text>
</comment>
<comment type="subcellular location">
    <subcellularLocation>
        <location evidence="1">Cytoplasm</location>
    </subcellularLocation>
</comment>
<comment type="similarity">
    <text evidence="1">Belongs to the purine/pyrimidine phosphoribosyltransferase family.</text>
</comment>
<reference key="1">
    <citation type="journal article" date="2007" name="PLoS Genet.">
        <title>Patterns and implications of gene gain and loss in the evolution of Prochlorococcus.</title>
        <authorList>
            <person name="Kettler G.C."/>
            <person name="Martiny A.C."/>
            <person name="Huang K."/>
            <person name="Zucker J."/>
            <person name="Coleman M.L."/>
            <person name="Rodrigue S."/>
            <person name="Chen F."/>
            <person name="Lapidus A."/>
            <person name="Ferriera S."/>
            <person name="Johnson J."/>
            <person name="Steglich C."/>
            <person name="Church G.M."/>
            <person name="Richardson P."/>
            <person name="Chisholm S.W."/>
        </authorList>
    </citation>
    <scope>NUCLEOTIDE SEQUENCE [LARGE SCALE GENOMIC DNA]</scope>
    <source>
        <strain>MIT 9515</strain>
    </source>
</reference>